<keyword id="KW-0963">Cytoplasm</keyword>
<keyword id="KW-0255">Endonuclease</keyword>
<keyword id="KW-0378">Hydrolase</keyword>
<keyword id="KW-0460">Magnesium</keyword>
<keyword id="KW-0479">Metal-binding</keyword>
<keyword id="KW-0540">Nuclease</keyword>
<keyword id="KW-0694">RNA-binding</keyword>
<keyword id="KW-0698">rRNA processing</keyword>
<keyword id="KW-0699">rRNA-binding</keyword>
<keyword id="KW-0819">tRNA processing</keyword>
<keyword id="KW-0820">tRNA-binding</keyword>
<sequence>MTAELLVNVTPSETRVAYIDGGILQEIHIEREARRGIVGNIYKGRVSRVLPGMQAAFVDIGLDKAAFLHASDIMPHTECVAGDEQKQFTVRDISELVRQGQDLMVQVVKDPLGTKGARLTTDITLPSRYLVFMPGASHVGVSQRIESESERERLKKVVAEYCDEQGGFIIRTAAEGVCEEDLASDAAYLKRVWTKVMERKKRPQTRYQMYGELALAQRVLRDFADAQLDRIRVDSRLTYESLLEFTAEYIPEMTSKLEHYSGHQPIFDLYDVENEIQRALERKVELKSGGYLIIDQTEAMTTVDINTGAFVGHRNLDDTIFNTNIEATQAIARQLRLRNLGGIIIIDFIDMNNEDHRRRVLHSLEQALSKDRVKTSINGFSPLGLVEMTRKRTRESVEHVLCNECPTCHGRGTVKTVETVCYEIMREIVRVHHAYDSDRFLVYASPAVAEALKGEESHALAEVEIFVGKQVKVQVEPLYNQEQFDVVMM</sequence>
<gene>
    <name evidence="6" type="primary">rng</name>
    <name evidence="5" type="synonym">cafA</name>
    <name type="ordered locus">SL1344_3342</name>
</gene>
<proteinExistence type="evidence at protein level"/>
<feature type="chain" id="PRO_0000450348" description="Ribonuclease G">
    <location>
        <begin position="1"/>
        <end position="489"/>
    </location>
</feature>
<feature type="domain" description="S1 motif" evidence="2">
    <location>
        <begin position="39"/>
        <end position="128"/>
    </location>
</feature>
<feature type="binding site" evidence="1">
    <location>
        <position position="304"/>
    </location>
    <ligand>
        <name>Mg(2+)</name>
        <dbReference type="ChEBI" id="CHEBI:18420"/>
        <note>catalytic</note>
    </ligand>
</feature>
<feature type="binding site" evidence="1">
    <location>
        <position position="347"/>
    </location>
    <ligand>
        <name>Mg(2+)</name>
        <dbReference type="ChEBI" id="CHEBI:18420"/>
        <note>catalytic</note>
    </ligand>
</feature>
<name>RNG_SALTS</name>
<organism>
    <name type="scientific">Salmonella typhimurium (strain SL1344)</name>
    <dbReference type="NCBI Taxonomy" id="216597"/>
    <lineage>
        <taxon>Bacteria</taxon>
        <taxon>Pseudomonadati</taxon>
        <taxon>Pseudomonadota</taxon>
        <taxon>Gammaproteobacteria</taxon>
        <taxon>Enterobacterales</taxon>
        <taxon>Enterobacteriaceae</taxon>
        <taxon>Salmonella</taxon>
    </lineage>
</organism>
<evidence type="ECO:0000250" key="1">
    <source>
        <dbReference type="UniProtKB" id="P0A9J0"/>
    </source>
</evidence>
<evidence type="ECO:0000255" key="2">
    <source>
        <dbReference type="PROSITE-ProRule" id="PRU00180"/>
    </source>
</evidence>
<evidence type="ECO:0000269" key="3">
    <source>
    </source>
</evidence>
<evidence type="ECO:0000269" key="4">
    <source>
    </source>
</evidence>
<evidence type="ECO:0000303" key="5">
    <source>
    </source>
</evidence>
<evidence type="ECO:0000303" key="6">
    <source>
    </source>
</evidence>
<evidence type="ECO:0000305" key="7"/>
<dbReference type="EC" id="3.1.26.-"/>
<dbReference type="EMBL" id="FQ312003">
    <property type="protein sequence ID" value="CBW19438.1"/>
    <property type="molecule type" value="Genomic_DNA"/>
</dbReference>
<dbReference type="RefSeq" id="WP_000123188.1">
    <property type="nucleotide sequence ID" value="NZ_QASL01000018.1"/>
</dbReference>
<dbReference type="SMR" id="A0A0H3NGK0"/>
<dbReference type="KEGG" id="sey:SL1344_3342"/>
<dbReference type="PATRIC" id="fig|216597.6.peg.3723"/>
<dbReference type="HOGENOM" id="CLU_003468_5_3_6"/>
<dbReference type="BioCyc" id="SENT216597:SL1344_RS17405-MONOMER"/>
<dbReference type="Proteomes" id="UP000008962">
    <property type="component" value="Chromosome"/>
</dbReference>
<dbReference type="GO" id="GO:0005737">
    <property type="term" value="C:cytoplasm"/>
    <property type="evidence" value="ECO:0007669"/>
    <property type="project" value="UniProtKB-SubCell"/>
</dbReference>
<dbReference type="GO" id="GO:0004519">
    <property type="term" value="F:endonuclease activity"/>
    <property type="evidence" value="ECO:0007669"/>
    <property type="project" value="UniProtKB-KW"/>
</dbReference>
<dbReference type="GO" id="GO:0046872">
    <property type="term" value="F:metal ion binding"/>
    <property type="evidence" value="ECO:0007669"/>
    <property type="project" value="UniProtKB-KW"/>
</dbReference>
<dbReference type="GO" id="GO:0004540">
    <property type="term" value="F:RNA nuclease activity"/>
    <property type="evidence" value="ECO:0007669"/>
    <property type="project" value="InterPro"/>
</dbReference>
<dbReference type="GO" id="GO:0019843">
    <property type="term" value="F:rRNA binding"/>
    <property type="evidence" value="ECO:0007669"/>
    <property type="project" value="UniProtKB-KW"/>
</dbReference>
<dbReference type="GO" id="GO:0000049">
    <property type="term" value="F:tRNA binding"/>
    <property type="evidence" value="ECO:0007669"/>
    <property type="project" value="UniProtKB-KW"/>
</dbReference>
<dbReference type="GO" id="GO:0006364">
    <property type="term" value="P:rRNA processing"/>
    <property type="evidence" value="ECO:0007669"/>
    <property type="project" value="UniProtKB-KW"/>
</dbReference>
<dbReference type="GO" id="GO:0008033">
    <property type="term" value="P:tRNA processing"/>
    <property type="evidence" value="ECO:0007669"/>
    <property type="project" value="UniProtKB-KW"/>
</dbReference>
<dbReference type="CDD" id="cd04453">
    <property type="entry name" value="S1_RNase_E"/>
    <property type="match status" value="1"/>
</dbReference>
<dbReference type="FunFam" id="2.40.50.140:FF:000028">
    <property type="entry name" value="Ribonuclease G"/>
    <property type="match status" value="1"/>
</dbReference>
<dbReference type="FunFam" id="3.40.1260.20:FF:000001">
    <property type="entry name" value="Ribonuclease G Rng"/>
    <property type="match status" value="1"/>
</dbReference>
<dbReference type="Gene3D" id="2.40.50.140">
    <property type="entry name" value="Nucleic acid-binding proteins"/>
    <property type="match status" value="1"/>
</dbReference>
<dbReference type="Gene3D" id="3.40.1260.20">
    <property type="entry name" value="Ribonuclease E, catalytic domain"/>
    <property type="match status" value="1"/>
</dbReference>
<dbReference type="InterPro" id="IPR012340">
    <property type="entry name" value="NA-bd_OB-fold"/>
</dbReference>
<dbReference type="InterPro" id="IPR019307">
    <property type="entry name" value="RNA-bd_AU-1/RNase_E/G"/>
</dbReference>
<dbReference type="InterPro" id="IPR004659">
    <property type="entry name" value="RNase_E/G"/>
</dbReference>
<dbReference type="InterPro" id="IPR048583">
    <property type="entry name" value="RNase_E_G_thioredoxin-like"/>
</dbReference>
<dbReference type="InterPro" id="IPR003029">
    <property type="entry name" value="S1_domain"/>
</dbReference>
<dbReference type="NCBIfam" id="NF008689">
    <property type="entry name" value="PRK11712.1"/>
    <property type="match status" value="1"/>
</dbReference>
<dbReference type="NCBIfam" id="TIGR00757">
    <property type="entry name" value="RNaseEG"/>
    <property type="match status" value="1"/>
</dbReference>
<dbReference type="PANTHER" id="PTHR30001">
    <property type="entry name" value="RIBONUCLEASE"/>
    <property type="match status" value="1"/>
</dbReference>
<dbReference type="PANTHER" id="PTHR30001:SF0">
    <property type="entry name" value="RIBONUCLEASE G"/>
    <property type="match status" value="1"/>
</dbReference>
<dbReference type="Pfam" id="PF10150">
    <property type="entry name" value="RNase_E_G"/>
    <property type="match status" value="1"/>
</dbReference>
<dbReference type="Pfam" id="PF20833">
    <property type="entry name" value="RNase_E_G_Thio"/>
    <property type="match status" value="1"/>
</dbReference>
<dbReference type="Pfam" id="PF00575">
    <property type="entry name" value="S1"/>
    <property type="match status" value="1"/>
</dbReference>
<dbReference type="SMART" id="SM00316">
    <property type="entry name" value="S1"/>
    <property type="match status" value="1"/>
</dbReference>
<dbReference type="SUPFAM" id="SSF50249">
    <property type="entry name" value="Nucleic acid-binding proteins"/>
    <property type="match status" value="1"/>
</dbReference>
<dbReference type="PROSITE" id="PS50126">
    <property type="entry name" value="S1"/>
    <property type="match status" value="1"/>
</dbReference>
<accession>A0A0H3NGK0</accession>
<reference key="1">
    <citation type="journal article" date="2012" name="Proc. Natl. Acad. Sci. U.S.A.">
        <title>The transcriptional landscape and small RNAs of Salmonella enterica serovar Typhimurium.</title>
        <authorList>
            <person name="Kroger C."/>
            <person name="Dillon S.C."/>
            <person name="Cameron A.D."/>
            <person name="Papenfort K."/>
            <person name="Sivasankaran S.K."/>
            <person name="Hokamp K."/>
            <person name="Chao Y."/>
            <person name="Sittka A."/>
            <person name="Hebrard M."/>
            <person name="Handler K."/>
            <person name="Colgan A."/>
            <person name="Leekitcharoenphon P."/>
            <person name="Langridge G.C."/>
            <person name="Lohan A.J."/>
            <person name="Loftus B."/>
            <person name="Lucchini S."/>
            <person name="Ussery D.W."/>
            <person name="Dorman C.J."/>
            <person name="Thomson N.R."/>
            <person name="Vogel J."/>
            <person name="Hinton J.C."/>
        </authorList>
    </citation>
    <scope>NUCLEOTIDE SEQUENCE [LARGE SCALE GENOMIC DNA]</scope>
    <source>
        <strain>SL1344</strain>
    </source>
</reference>
<reference key="2">
    <citation type="journal article" date="2014" name="Nucleic Acids Res.">
        <title>Antibiotic stress-induced modulation of the endoribonucleolytic activity of RNase III and RNase G confers resistance to aminoglycoside antibiotics in Escherichia coli.</title>
        <authorList>
            <person name="Song W."/>
            <person name="Kim Y.H."/>
            <person name="Sim S.H."/>
            <person name="Hwang S."/>
            <person name="Lee J.H."/>
            <person name="Lee Y."/>
            <person name="Bae J."/>
            <person name="Hwang J."/>
            <person name="Lee K."/>
        </authorList>
    </citation>
    <scope>FUNCTION IN 16S RRNA MATURATION</scope>
    <scope>INDUCTION</scope>
    <scope>DISRUPTION PHENOTYPE</scope>
    <source>
        <strain>SL1344</strain>
    </source>
</reference>
<reference key="3">
    <citation type="journal article" date="2019" name="PLoS Genet.">
        <title>mRNA dynamics and alternative conformations adopted under low and high arginine concentrations control polyamine biosynthesis in Salmonella.</title>
        <authorList>
            <person name="Ben-Zvi T."/>
            <person name="Pushkarev A."/>
            <person name="Seri H."/>
            <person name="Elgrably-Weiss M."/>
            <person name="Papenfort K."/>
            <person name="Altuvia S."/>
        </authorList>
    </citation>
    <scope>FUNCTION</scope>
    <scope>DISRUPTION PHENOTYPE</scope>
    <source>
        <strain>SL1344</strain>
    </source>
</reference>
<comment type="function">
    <text evidence="1 3 4">Acts in the processing of the 5'-end of precursors of 16S rRNA. Confers adaptive resistance to aminoglycoside antibiotics through modulation of 16S rRNA processing (PubMed:24489121). An endoribonuclease, it prefers 5'-monophosphorylated substrates and cleaves single-stranded sites rich in A and U residues; also contributes to 23S rRNA processing, tRNA processing and mRNA turnover (By similarity). Involved in decay of speF mRNA, has a preference for adenine nucleotides (PubMed:30742606).</text>
</comment>
<comment type="cofactor">
    <cofactor evidence="1">
        <name>Mg(2+)</name>
        <dbReference type="ChEBI" id="CHEBI:18420"/>
    </cofactor>
    <text evidence="1">Binds 1 Mg(2+) ion per subunit.</text>
</comment>
<comment type="subunit">
    <text evidence="1">Homodimer, and possible higher multimers.</text>
</comment>
<comment type="subcellular location">
    <subcellularLocation>
        <location evidence="1">Cytoplasm</location>
    </subcellularLocation>
</comment>
<comment type="disruption phenotype">
    <text evidence="3 4">No visible phenotype in rich media. Significant accumulation of a 16S rRNA precursor. Increased resistance to aminoglycoside antibiotics kanamycin and paramomycin (PubMed:24489121). Increased lifetime of speF mRNA.</text>
</comment>
<comment type="similarity">
    <text evidence="7">Belongs to the RNase E/G family. RNase G subfamily.</text>
</comment>
<protein>
    <recommendedName>
        <fullName>Ribonuclease G</fullName>
        <shortName>RNase G</shortName>
        <ecNumber>3.1.26.-</ecNumber>
    </recommendedName>
</protein>